<dbReference type="EMBL" id="AK012680">
    <property type="protein sequence ID" value="BAB28406.1"/>
    <property type="molecule type" value="mRNA"/>
</dbReference>
<dbReference type="EMBL" id="AK028228">
    <property type="protein sequence ID" value="BAC25827.1"/>
    <property type="molecule type" value="mRNA"/>
</dbReference>
<dbReference type="EMBL" id="AK151198">
    <property type="protein sequence ID" value="BAE30195.1"/>
    <property type="molecule type" value="mRNA"/>
</dbReference>
<dbReference type="EMBL" id="BC098232">
    <property type="protein sequence ID" value="AAH98232.1"/>
    <property type="molecule type" value="mRNA"/>
</dbReference>
<dbReference type="CCDS" id="CCDS22211.1"/>
<dbReference type="RefSeq" id="NP_079962.1">
    <property type="nucleotide sequence ID" value="NM_025686.2"/>
</dbReference>
<dbReference type="SMR" id="Q3UAW9"/>
<dbReference type="FunCoup" id="Q3UAW9">
    <property type="interactions" value="660"/>
</dbReference>
<dbReference type="STRING" id="10090.ENSMUSP00000033877"/>
<dbReference type="iPTMnet" id="Q3UAW9"/>
<dbReference type="PhosphoSitePlus" id="Q3UAW9"/>
<dbReference type="PaxDb" id="10090-ENSMUSP00000033877"/>
<dbReference type="ProteomicsDB" id="273702"/>
<dbReference type="DNASU" id="66653"/>
<dbReference type="GeneID" id="66653"/>
<dbReference type="KEGG" id="mmu:66653"/>
<dbReference type="UCSC" id="uc009lhy.1">
    <property type="organism name" value="mouse"/>
</dbReference>
<dbReference type="AGR" id="MGI:1913903"/>
<dbReference type="CTD" id="55290"/>
<dbReference type="MGI" id="MGI:1913903">
    <property type="gene designation" value="Brf2"/>
</dbReference>
<dbReference type="eggNOG" id="KOG1598">
    <property type="taxonomic scope" value="Eukaryota"/>
</dbReference>
<dbReference type="InParanoid" id="Q3UAW9"/>
<dbReference type="OrthoDB" id="2121711at2759"/>
<dbReference type="PhylomeDB" id="Q3UAW9"/>
<dbReference type="TreeFam" id="TF331596"/>
<dbReference type="Reactome" id="R-MMU-76071">
    <property type="pathway name" value="RNA Polymerase III Transcription Initiation From Type 3 Promoter"/>
</dbReference>
<dbReference type="BioGRID-ORCS" id="66653">
    <property type="hits" value="22 hits in 76 CRISPR screens"/>
</dbReference>
<dbReference type="ChiTaRS" id="Brf2">
    <property type="organism name" value="mouse"/>
</dbReference>
<dbReference type="PRO" id="PR:Q3UAW9"/>
<dbReference type="Proteomes" id="UP000000589">
    <property type="component" value="Unplaced"/>
</dbReference>
<dbReference type="RNAct" id="Q3UAW9">
    <property type="molecule type" value="protein"/>
</dbReference>
<dbReference type="GO" id="GO:0005634">
    <property type="term" value="C:nucleus"/>
    <property type="evidence" value="ECO:0007669"/>
    <property type="project" value="UniProtKB-SubCell"/>
</dbReference>
<dbReference type="GO" id="GO:0000126">
    <property type="term" value="C:transcription factor TFIIIB complex"/>
    <property type="evidence" value="ECO:0000250"/>
    <property type="project" value="UniProtKB"/>
</dbReference>
<dbReference type="GO" id="GO:0001006">
    <property type="term" value="F:RNA polymerase III type 3 promoter sequence-specific DNA binding"/>
    <property type="evidence" value="ECO:0000250"/>
    <property type="project" value="UniProtKB"/>
</dbReference>
<dbReference type="GO" id="GO:0008270">
    <property type="term" value="F:zinc ion binding"/>
    <property type="evidence" value="ECO:0007669"/>
    <property type="project" value="UniProtKB-KW"/>
</dbReference>
<dbReference type="GO" id="GO:0034599">
    <property type="term" value="P:cellular response to oxidative stress"/>
    <property type="evidence" value="ECO:0000250"/>
    <property type="project" value="UniProtKB"/>
</dbReference>
<dbReference type="GO" id="GO:0006359">
    <property type="term" value="P:regulation of transcription by RNA polymerase III"/>
    <property type="evidence" value="ECO:0000250"/>
    <property type="project" value="UniProtKB"/>
</dbReference>
<dbReference type="GO" id="GO:0070897">
    <property type="term" value="P:transcription preinitiation complex assembly"/>
    <property type="evidence" value="ECO:0007669"/>
    <property type="project" value="InterPro"/>
</dbReference>
<dbReference type="CDD" id="cd20555">
    <property type="entry name" value="CYCLIN_BRF2"/>
    <property type="match status" value="1"/>
</dbReference>
<dbReference type="FunFam" id="1.10.472.10:FF:000046">
    <property type="entry name" value="Transcription factor IIIB 50 kDa subunit"/>
    <property type="match status" value="1"/>
</dbReference>
<dbReference type="FunFam" id="2.20.25.10:FF:000014">
    <property type="entry name" value="Transcription factor IIIB 50 kDa subunit"/>
    <property type="match status" value="1"/>
</dbReference>
<dbReference type="Gene3D" id="2.20.25.10">
    <property type="match status" value="1"/>
</dbReference>
<dbReference type="Gene3D" id="1.10.472.10">
    <property type="entry name" value="Cyclin-like"/>
    <property type="match status" value="1"/>
</dbReference>
<dbReference type="InterPro" id="IPR054078">
    <property type="entry name" value="BRF2-like_C"/>
</dbReference>
<dbReference type="InterPro" id="IPR036915">
    <property type="entry name" value="Cyclin-like_sf"/>
</dbReference>
<dbReference type="InterPro" id="IPR000812">
    <property type="entry name" value="TFIIB"/>
</dbReference>
<dbReference type="InterPro" id="IPR013137">
    <property type="entry name" value="Znf_TFIIB"/>
</dbReference>
<dbReference type="PANTHER" id="PTHR11618:SF5">
    <property type="entry name" value="TRANSCRIPTION FACTOR IIIB 50 KDA SUBUNIT"/>
    <property type="match status" value="1"/>
</dbReference>
<dbReference type="PANTHER" id="PTHR11618">
    <property type="entry name" value="TRANSCRIPTION INITIATION FACTOR IIB-RELATED"/>
    <property type="match status" value="1"/>
</dbReference>
<dbReference type="Pfam" id="PF21886">
    <property type="entry name" value="BRF2-like_C_cyclin_rpt"/>
    <property type="match status" value="1"/>
</dbReference>
<dbReference type="Pfam" id="PF08271">
    <property type="entry name" value="Zn_Ribbon_TF"/>
    <property type="match status" value="1"/>
</dbReference>
<dbReference type="SUPFAM" id="SSF47954">
    <property type="entry name" value="Cyclin-like"/>
    <property type="match status" value="1"/>
</dbReference>
<dbReference type="SUPFAM" id="SSF57783">
    <property type="entry name" value="Zinc beta-ribbon"/>
    <property type="match status" value="1"/>
</dbReference>
<dbReference type="PROSITE" id="PS51134">
    <property type="entry name" value="ZF_TFIIB"/>
    <property type="match status" value="1"/>
</dbReference>
<protein>
    <recommendedName>
        <fullName>Transcription factor IIIB 50 kDa subunit</fullName>
    </recommendedName>
    <alternativeName>
        <fullName>B-related factor 2</fullName>
        <shortName>BRF-2</shortName>
    </alternativeName>
</protein>
<comment type="function">
    <text evidence="1">General activator of RNA polymerase III transcription. Factor exclusively required for RNA polymerase III transcription of genes with promoter elements upstream of the initiation sites. Contributes to the regulation of gene expression; functions as activator in the absence of oxidative stress. Down-regulates expression of target genes in response to oxidative stress. Overexpression protects cells against apoptosis in response to oxidative stress.</text>
</comment>
<comment type="subunit">
    <text evidence="1">Component of TFIIIB complexes. The TFIIIB complex has two activities, alpha and beta. The TFIIIB-alpha activity complex is composed of TBP, BDP1, and a complex containing both BRF2 and at least four stably associated proteins; this complex inhibits the transcription by pol III via its phosphorylation by CK2; YY1 facilitates the TFIIIB-alpha complex formation. Interacts with TBP; this interaction promotes recruitment of BRF2 to TATA box-containing promoters. Interacts with TBP and the BURE sequence (GC-rich sequence downstream from the TATA box) to form a strong ternary complex which is joined by BDP1; this ternary complex stimulates pol III transcription. Forms a trimeric complex composed of TBP, BRF2 and mini-SNAPc complex (SNAP43, SNAP50, and the N-terminal third of SNAP190) on the promoter. Assembly of the TBP-BRF2 complex is stimulated by SNAP190. Interacts with MAF1 and SNAPC4.</text>
</comment>
<comment type="subcellular location">
    <subcellularLocation>
        <location evidence="1">Nucleus</location>
    </subcellularLocation>
</comment>
<comment type="PTM">
    <text evidence="1">In response to oxidative stress, Cys-362 is reversibly oxidized to cysteine sulfenic acid. Oxidation of Cys-362 impairs formation of a ternary complex with TBP and DNA and down-regulates expression of target genes in response to oxidative stress.</text>
</comment>
<comment type="similarity">
    <text evidence="4">Belongs to the TFIIB family.</text>
</comment>
<feature type="chain" id="PRO_0000337189" description="Transcription factor IIIB 50 kDa subunit">
    <location>
        <begin position="1"/>
        <end position="420"/>
    </location>
</feature>
<feature type="repeat" description="1">
    <location>
        <begin position="72"/>
        <end position="157"/>
    </location>
</feature>
<feature type="repeat" description="2">
    <location>
        <begin position="173"/>
        <end position="249"/>
    </location>
</feature>
<feature type="zinc finger region" description="TFIIB-type" evidence="2">
    <location>
        <begin position="3"/>
        <end position="36"/>
    </location>
</feature>
<feature type="region of interest" description="Interaction with target DNA" evidence="1">
    <location>
        <begin position="108"/>
        <end position="114"/>
    </location>
</feature>
<feature type="region of interest" description="Disordered" evidence="3">
    <location>
        <begin position="316"/>
        <end position="387"/>
    </location>
</feature>
<feature type="region of interest" description="Required for the formation of a ternary complex with DNA and TBP; not required for interaction with TBP in the absence of DNA" evidence="1">
    <location>
        <begin position="358"/>
        <end position="364"/>
    </location>
</feature>
<feature type="region of interest" description="Required for interaction with TBP and formation of a ternary complex with DNA and TBP" evidence="1">
    <location>
        <begin position="366"/>
        <end position="420"/>
    </location>
</feature>
<feature type="compositionally biased region" description="Low complexity" evidence="3">
    <location>
        <begin position="322"/>
        <end position="336"/>
    </location>
</feature>
<feature type="binding site" evidence="2">
    <location>
        <position position="7"/>
    </location>
    <ligand>
        <name>Zn(2+)</name>
        <dbReference type="ChEBI" id="CHEBI:29105"/>
    </ligand>
</feature>
<feature type="binding site" evidence="2">
    <location>
        <position position="10"/>
    </location>
    <ligand>
        <name>Zn(2+)</name>
        <dbReference type="ChEBI" id="CHEBI:29105"/>
    </ligand>
</feature>
<feature type="binding site" evidence="2">
    <location>
        <position position="28"/>
    </location>
    <ligand>
        <name>Zn(2+)</name>
        <dbReference type="ChEBI" id="CHEBI:29105"/>
    </ligand>
</feature>
<feature type="binding site" evidence="2">
    <location>
        <position position="31"/>
    </location>
    <ligand>
        <name>Zn(2+)</name>
        <dbReference type="ChEBI" id="CHEBI:29105"/>
    </ligand>
</feature>
<feature type="modified residue" description="Phosphoserine" evidence="1">
    <location>
        <position position="354"/>
    </location>
</feature>
<feature type="modified residue" description="Cysteine sulfenic acid (-SOH)" evidence="1">
    <location>
        <position position="362"/>
    </location>
</feature>
<feature type="sequence conflict" description="In Ref. 1; BAB28406/BAC25827 and 2; AAH98232." evidence="4" ref="1 2">
    <original>R</original>
    <variation>P</variation>
    <location>
        <position position="352"/>
    </location>
</feature>
<keyword id="KW-0010">Activator</keyword>
<keyword id="KW-0479">Metal-binding</keyword>
<keyword id="KW-0539">Nucleus</keyword>
<keyword id="KW-0558">Oxidation</keyword>
<keyword id="KW-0597">Phosphoprotein</keyword>
<keyword id="KW-1185">Reference proteome</keyword>
<keyword id="KW-0677">Repeat</keyword>
<keyword id="KW-0804">Transcription</keyword>
<keyword id="KW-0805">Transcription regulation</keyword>
<keyword id="KW-0862">Zinc</keyword>
<keyword id="KW-0863">Zinc-finger</keyword>
<gene>
    <name type="primary">Brf2</name>
</gene>
<proteinExistence type="evidence at protein level"/>
<evidence type="ECO:0000250" key="1">
    <source>
        <dbReference type="UniProtKB" id="Q9HAW0"/>
    </source>
</evidence>
<evidence type="ECO:0000255" key="2">
    <source>
        <dbReference type="PROSITE-ProRule" id="PRU00469"/>
    </source>
</evidence>
<evidence type="ECO:0000256" key="3">
    <source>
        <dbReference type="SAM" id="MobiDB-lite"/>
    </source>
</evidence>
<evidence type="ECO:0000305" key="4"/>
<sequence length="420" mass="47050">MPNGSRCPDCGSSELVEDSHYSQSQLVCSDCGCVVTEGVLTTTFSDEGNFREVTYSRSTGENEQVSRCQQRDLRRVRDLCRILKLPLTFEDTAISYYQKAYQLSGIRAARLQKKEVLVGCCVLITCRQHNWPLTMGTICTLLYADLDLFSGTYMQMVKLLGLDVPSLCLADLVKSYCSSFKLFQASPSVPAKYVEDKDKMLSRTLLLVELADETWLVTGRHPLPIITAATFLAWQSLRPSDRLTCSLAQFCKLANVDLPYPAASRLQELLAVLLQMAGQLAWLQVLKLNKRSVVKHIGDLLQHRHMLVRTAFRDGTAEVETQQQQQQQQGQGQGQQDEVGDGPFDLPKRKRRASPTPLLPPCMLKPPKRTHTLPPESAVTGDEDISDSEIEQYLRTPQEVRDFERAQAASQAAMRVPNPP</sequence>
<name>BRF2_MOUSE</name>
<reference key="1">
    <citation type="journal article" date="2005" name="Science">
        <title>The transcriptional landscape of the mammalian genome.</title>
        <authorList>
            <person name="Carninci P."/>
            <person name="Kasukawa T."/>
            <person name="Katayama S."/>
            <person name="Gough J."/>
            <person name="Frith M.C."/>
            <person name="Maeda N."/>
            <person name="Oyama R."/>
            <person name="Ravasi T."/>
            <person name="Lenhard B."/>
            <person name="Wells C."/>
            <person name="Kodzius R."/>
            <person name="Shimokawa K."/>
            <person name="Bajic V.B."/>
            <person name="Brenner S.E."/>
            <person name="Batalov S."/>
            <person name="Forrest A.R."/>
            <person name="Zavolan M."/>
            <person name="Davis M.J."/>
            <person name="Wilming L.G."/>
            <person name="Aidinis V."/>
            <person name="Allen J.E."/>
            <person name="Ambesi-Impiombato A."/>
            <person name="Apweiler R."/>
            <person name="Aturaliya R.N."/>
            <person name="Bailey T.L."/>
            <person name="Bansal M."/>
            <person name="Baxter L."/>
            <person name="Beisel K.W."/>
            <person name="Bersano T."/>
            <person name="Bono H."/>
            <person name="Chalk A.M."/>
            <person name="Chiu K.P."/>
            <person name="Choudhary V."/>
            <person name="Christoffels A."/>
            <person name="Clutterbuck D.R."/>
            <person name="Crowe M.L."/>
            <person name="Dalla E."/>
            <person name="Dalrymple B.P."/>
            <person name="de Bono B."/>
            <person name="Della Gatta G."/>
            <person name="di Bernardo D."/>
            <person name="Down T."/>
            <person name="Engstrom P."/>
            <person name="Fagiolini M."/>
            <person name="Faulkner G."/>
            <person name="Fletcher C.F."/>
            <person name="Fukushima T."/>
            <person name="Furuno M."/>
            <person name="Futaki S."/>
            <person name="Gariboldi M."/>
            <person name="Georgii-Hemming P."/>
            <person name="Gingeras T.R."/>
            <person name="Gojobori T."/>
            <person name="Green R.E."/>
            <person name="Gustincich S."/>
            <person name="Harbers M."/>
            <person name="Hayashi Y."/>
            <person name="Hensch T.K."/>
            <person name="Hirokawa N."/>
            <person name="Hill D."/>
            <person name="Huminiecki L."/>
            <person name="Iacono M."/>
            <person name="Ikeo K."/>
            <person name="Iwama A."/>
            <person name="Ishikawa T."/>
            <person name="Jakt M."/>
            <person name="Kanapin A."/>
            <person name="Katoh M."/>
            <person name="Kawasawa Y."/>
            <person name="Kelso J."/>
            <person name="Kitamura H."/>
            <person name="Kitano H."/>
            <person name="Kollias G."/>
            <person name="Krishnan S.P."/>
            <person name="Kruger A."/>
            <person name="Kummerfeld S.K."/>
            <person name="Kurochkin I.V."/>
            <person name="Lareau L.F."/>
            <person name="Lazarevic D."/>
            <person name="Lipovich L."/>
            <person name="Liu J."/>
            <person name="Liuni S."/>
            <person name="McWilliam S."/>
            <person name="Madan Babu M."/>
            <person name="Madera M."/>
            <person name="Marchionni L."/>
            <person name="Matsuda H."/>
            <person name="Matsuzawa S."/>
            <person name="Miki H."/>
            <person name="Mignone F."/>
            <person name="Miyake S."/>
            <person name="Morris K."/>
            <person name="Mottagui-Tabar S."/>
            <person name="Mulder N."/>
            <person name="Nakano N."/>
            <person name="Nakauchi H."/>
            <person name="Ng P."/>
            <person name="Nilsson R."/>
            <person name="Nishiguchi S."/>
            <person name="Nishikawa S."/>
            <person name="Nori F."/>
            <person name="Ohara O."/>
            <person name="Okazaki Y."/>
            <person name="Orlando V."/>
            <person name="Pang K.C."/>
            <person name="Pavan W.J."/>
            <person name="Pavesi G."/>
            <person name="Pesole G."/>
            <person name="Petrovsky N."/>
            <person name="Piazza S."/>
            <person name="Reed J."/>
            <person name="Reid J.F."/>
            <person name="Ring B.Z."/>
            <person name="Ringwald M."/>
            <person name="Rost B."/>
            <person name="Ruan Y."/>
            <person name="Salzberg S.L."/>
            <person name="Sandelin A."/>
            <person name="Schneider C."/>
            <person name="Schoenbach C."/>
            <person name="Sekiguchi K."/>
            <person name="Semple C.A."/>
            <person name="Seno S."/>
            <person name="Sessa L."/>
            <person name="Sheng Y."/>
            <person name="Shibata Y."/>
            <person name="Shimada H."/>
            <person name="Shimada K."/>
            <person name="Silva D."/>
            <person name="Sinclair B."/>
            <person name="Sperling S."/>
            <person name="Stupka E."/>
            <person name="Sugiura K."/>
            <person name="Sultana R."/>
            <person name="Takenaka Y."/>
            <person name="Taki K."/>
            <person name="Tammoja K."/>
            <person name="Tan S.L."/>
            <person name="Tang S."/>
            <person name="Taylor M.S."/>
            <person name="Tegner J."/>
            <person name="Teichmann S.A."/>
            <person name="Ueda H.R."/>
            <person name="van Nimwegen E."/>
            <person name="Verardo R."/>
            <person name="Wei C.L."/>
            <person name="Yagi K."/>
            <person name="Yamanishi H."/>
            <person name="Zabarovsky E."/>
            <person name="Zhu S."/>
            <person name="Zimmer A."/>
            <person name="Hide W."/>
            <person name="Bult C."/>
            <person name="Grimmond S.M."/>
            <person name="Teasdale R.D."/>
            <person name="Liu E.T."/>
            <person name="Brusic V."/>
            <person name="Quackenbush J."/>
            <person name="Wahlestedt C."/>
            <person name="Mattick J.S."/>
            <person name="Hume D.A."/>
            <person name="Kai C."/>
            <person name="Sasaki D."/>
            <person name="Tomaru Y."/>
            <person name="Fukuda S."/>
            <person name="Kanamori-Katayama M."/>
            <person name="Suzuki M."/>
            <person name="Aoki J."/>
            <person name="Arakawa T."/>
            <person name="Iida J."/>
            <person name="Imamura K."/>
            <person name="Itoh M."/>
            <person name="Kato T."/>
            <person name="Kawaji H."/>
            <person name="Kawagashira N."/>
            <person name="Kawashima T."/>
            <person name="Kojima M."/>
            <person name="Kondo S."/>
            <person name="Konno H."/>
            <person name="Nakano K."/>
            <person name="Ninomiya N."/>
            <person name="Nishio T."/>
            <person name="Okada M."/>
            <person name="Plessy C."/>
            <person name="Shibata K."/>
            <person name="Shiraki T."/>
            <person name="Suzuki S."/>
            <person name="Tagami M."/>
            <person name="Waki K."/>
            <person name="Watahiki A."/>
            <person name="Okamura-Oho Y."/>
            <person name="Suzuki H."/>
            <person name="Kawai J."/>
            <person name="Hayashizaki Y."/>
        </authorList>
    </citation>
    <scope>NUCLEOTIDE SEQUENCE [LARGE SCALE MRNA]</scope>
    <source>
        <strain>C57BL/6J</strain>
        <tissue>Bone marrow</tissue>
    </source>
</reference>
<reference key="2">
    <citation type="journal article" date="2004" name="Genome Res.">
        <title>The status, quality, and expansion of the NIH full-length cDNA project: the Mammalian Gene Collection (MGC).</title>
        <authorList>
            <consortium name="The MGC Project Team"/>
        </authorList>
    </citation>
    <scope>NUCLEOTIDE SEQUENCE [LARGE SCALE MRNA]</scope>
    <source>
        <strain>Czech II</strain>
        <tissue>Lung</tissue>
    </source>
</reference>
<reference key="3">
    <citation type="journal article" date="2010" name="Cell">
        <title>A tissue-specific atlas of mouse protein phosphorylation and expression.</title>
        <authorList>
            <person name="Huttlin E.L."/>
            <person name="Jedrychowski M.P."/>
            <person name="Elias J.E."/>
            <person name="Goswami T."/>
            <person name="Rad R."/>
            <person name="Beausoleil S.A."/>
            <person name="Villen J."/>
            <person name="Haas W."/>
            <person name="Sowa M.E."/>
            <person name="Gygi S.P."/>
        </authorList>
    </citation>
    <scope>IDENTIFICATION BY MASS SPECTROMETRY [LARGE SCALE ANALYSIS]</scope>
    <source>
        <tissue>Kidney</tissue>
        <tissue>Spleen</tissue>
    </source>
</reference>
<organism>
    <name type="scientific">Mus musculus</name>
    <name type="common">Mouse</name>
    <dbReference type="NCBI Taxonomy" id="10090"/>
    <lineage>
        <taxon>Eukaryota</taxon>
        <taxon>Metazoa</taxon>
        <taxon>Chordata</taxon>
        <taxon>Craniata</taxon>
        <taxon>Vertebrata</taxon>
        <taxon>Euteleostomi</taxon>
        <taxon>Mammalia</taxon>
        <taxon>Eutheria</taxon>
        <taxon>Euarchontoglires</taxon>
        <taxon>Glires</taxon>
        <taxon>Rodentia</taxon>
        <taxon>Myomorpha</taxon>
        <taxon>Muroidea</taxon>
        <taxon>Muridae</taxon>
        <taxon>Murinae</taxon>
        <taxon>Mus</taxon>
        <taxon>Mus</taxon>
    </lineage>
</organism>
<accession>Q3UAW9</accession>
<accession>Q9CZF0</accession>